<feature type="chain" id="PRO_0000331822" description="Methionine--tRNA ligase">
    <location>
        <begin position="1"/>
        <end position="677"/>
    </location>
</feature>
<feature type="domain" description="tRNA-binding" evidence="1">
    <location>
        <begin position="575"/>
        <end position="677"/>
    </location>
</feature>
<feature type="short sequence motif" description="'HIGH' region">
    <location>
        <begin position="15"/>
        <end position="25"/>
    </location>
</feature>
<feature type="short sequence motif" description="'KMSKS' region">
    <location>
        <begin position="333"/>
        <end position="337"/>
    </location>
</feature>
<feature type="binding site" evidence="1">
    <location>
        <position position="146"/>
    </location>
    <ligand>
        <name>Zn(2+)</name>
        <dbReference type="ChEBI" id="CHEBI:29105"/>
    </ligand>
</feature>
<feature type="binding site" evidence="1">
    <location>
        <position position="149"/>
    </location>
    <ligand>
        <name>Zn(2+)</name>
        <dbReference type="ChEBI" id="CHEBI:29105"/>
    </ligand>
</feature>
<feature type="binding site" evidence="1">
    <location>
        <position position="159"/>
    </location>
    <ligand>
        <name>Zn(2+)</name>
        <dbReference type="ChEBI" id="CHEBI:29105"/>
    </ligand>
</feature>
<feature type="binding site" evidence="1">
    <location>
        <position position="162"/>
    </location>
    <ligand>
        <name>Zn(2+)</name>
        <dbReference type="ChEBI" id="CHEBI:29105"/>
    </ligand>
</feature>
<feature type="binding site" evidence="1">
    <location>
        <position position="336"/>
    </location>
    <ligand>
        <name>ATP</name>
        <dbReference type="ChEBI" id="CHEBI:30616"/>
    </ligand>
</feature>
<keyword id="KW-0030">Aminoacyl-tRNA synthetase</keyword>
<keyword id="KW-0067">ATP-binding</keyword>
<keyword id="KW-0963">Cytoplasm</keyword>
<keyword id="KW-0436">Ligase</keyword>
<keyword id="KW-0479">Metal-binding</keyword>
<keyword id="KW-0547">Nucleotide-binding</keyword>
<keyword id="KW-0648">Protein biosynthesis</keyword>
<keyword id="KW-0694">RNA-binding</keyword>
<keyword id="KW-0820">tRNA-binding</keyword>
<keyword id="KW-0862">Zinc</keyword>
<gene>
    <name evidence="1" type="primary">metG</name>
    <name type="ordered locus">EcHS_A2249</name>
</gene>
<accession>A8A1X8</accession>
<comment type="function">
    <text evidence="1">Is required not only for elongation of protein synthesis but also for the initiation of all mRNA translation through initiator tRNA(fMet) aminoacylation.</text>
</comment>
<comment type="catalytic activity">
    <reaction evidence="1">
        <text>tRNA(Met) + L-methionine + ATP = L-methionyl-tRNA(Met) + AMP + diphosphate</text>
        <dbReference type="Rhea" id="RHEA:13481"/>
        <dbReference type="Rhea" id="RHEA-COMP:9667"/>
        <dbReference type="Rhea" id="RHEA-COMP:9698"/>
        <dbReference type="ChEBI" id="CHEBI:30616"/>
        <dbReference type="ChEBI" id="CHEBI:33019"/>
        <dbReference type="ChEBI" id="CHEBI:57844"/>
        <dbReference type="ChEBI" id="CHEBI:78442"/>
        <dbReference type="ChEBI" id="CHEBI:78530"/>
        <dbReference type="ChEBI" id="CHEBI:456215"/>
        <dbReference type="EC" id="6.1.1.10"/>
    </reaction>
</comment>
<comment type="cofactor">
    <cofactor evidence="1">
        <name>Zn(2+)</name>
        <dbReference type="ChEBI" id="CHEBI:29105"/>
    </cofactor>
    <text evidence="1">Binds 1 zinc ion per subunit.</text>
</comment>
<comment type="subunit">
    <text evidence="1">Homodimer.</text>
</comment>
<comment type="subcellular location">
    <subcellularLocation>
        <location evidence="1">Cytoplasm</location>
    </subcellularLocation>
</comment>
<comment type="similarity">
    <text evidence="1">Belongs to the class-I aminoacyl-tRNA synthetase family. MetG type 1 subfamily.</text>
</comment>
<organism>
    <name type="scientific">Escherichia coli O9:H4 (strain HS)</name>
    <dbReference type="NCBI Taxonomy" id="331112"/>
    <lineage>
        <taxon>Bacteria</taxon>
        <taxon>Pseudomonadati</taxon>
        <taxon>Pseudomonadota</taxon>
        <taxon>Gammaproteobacteria</taxon>
        <taxon>Enterobacterales</taxon>
        <taxon>Enterobacteriaceae</taxon>
        <taxon>Escherichia</taxon>
    </lineage>
</organism>
<proteinExistence type="inferred from homology"/>
<dbReference type="EC" id="6.1.1.10" evidence="1"/>
<dbReference type="EMBL" id="CP000802">
    <property type="protein sequence ID" value="ABV06532.1"/>
    <property type="molecule type" value="Genomic_DNA"/>
</dbReference>
<dbReference type="RefSeq" id="WP_001300883.1">
    <property type="nucleotide sequence ID" value="NC_009800.1"/>
</dbReference>
<dbReference type="SMR" id="A8A1X8"/>
<dbReference type="KEGG" id="ecx:EcHS_A2249"/>
<dbReference type="HOGENOM" id="CLU_009710_7_0_6"/>
<dbReference type="GO" id="GO:0005829">
    <property type="term" value="C:cytosol"/>
    <property type="evidence" value="ECO:0007669"/>
    <property type="project" value="TreeGrafter"/>
</dbReference>
<dbReference type="GO" id="GO:0005524">
    <property type="term" value="F:ATP binding"/>
    <property type="evidence" value="ECO:0007669"/>
    <property type="project" value="UniProtKB-UniRule"/>
</dbReference>
<dbReference type="GO" id="GO:0046872">
    <property type="term" value="F:metal ion binding"/>
    <property type="evidence" value="ECO:0007669"/>
    <property type="project" value="UniProtKB-KW"/>
</dbReference>
<dbReference type="GO" id="GO:0004825">
    <property type="term" value="F:methionine-tRNA ligase activity"/>
    <property type="evidence" value="ECO:0007669"/>
    <property type="project" value="UniProtKB-UniRule"/>
</dbReference>
<dbReference type="GO" id="GO:0000049">
    <property type="term" value="F:tRNA binding"/>
    <property type="evidence" value="ECO:0007669"/>
    <property type="project" value="UniProtKB-KW"/>
</dbReference>
<dbReference type="GO" id="GO:0006431">
    <property type="term" value="P:methionyl-tRNA aminoacylation"/>
    <property type="evidence" value="ECO:0007669"/>
    <property type="project" value="UniProtKB-UniRule"/>
</dbReference>
<dbReference type="CDD" id="cd07957">
    <property type="entry name" value="Anticodon_Ia_Met"/>
    <property type="match status" value="1"/>
</dbReference>
<dbReference type="CDD" id="cd00814">
    <property type="entry name" value="MetRS_core"/>
    <property type="match status" value="1"/>
</dbReference>
<dbReference type="CDD" id="cd02800">
    <property type="entry name" value="tRNA_bind_EcMetRS_like"/>
    <property type="match status" value="1"/>
</dbReference>
<dbReference type="FunFam" id="1.10.730.10:FF:000005">
    <property type="entry name" value="Methionine--tRNA ligase"/>
    <property type="match status" value="1"/>
</dbReference>
<dbReference type="FunFam" id="2.20.28.20:FF:000001">
    <property type="entry name" value="Methionine--tRNA ligase"/>
    <property type="match status" value="1"/>
</dbReference>
<dbReference type="FunFam" id="2.40.50.140:FF:000042">
    <property type="entry name" value="Methionine--tRNA ligase"/>
    <property type="match status" value="1"/>
</dbReference>
<dbReference type="Gene3D" id="3.40.50.620">
    <property type="entry name" value="HUPs"/>
    <property type="match status" value="1"/>
</dbReference>
<dbReference type="Gene3D" id="1.10.730.10">
    <property type="entry name" value="Isoleucyl-tRNA Synthetase, Domain 1"/>
    <property type="match status" value="1"/>
</dbReference>
<dbReference type="Gene3D" id="2.20.28.20">
    <property type="entry name" value="Methionyl-tRNA synthetase, Zn-domain"/>
    <property type="match status" value="1"/>
</dbReference>
<dbReference type="Gene3D" id="2.40.50.140">
    <property type="entry name" value="Nucleic acid-binding proteins"/>
    <property type="match status" value="1"/>
</dbReference>
<dbReference type="HAMAP" id="MF_00098">
    <property type="entry name" value="Met_tRNA_synth_type1"/>
    <property type="match status" value="1"/>
</dbReference>
<dbReference type="InterPro" id="IPR001412">
    <property type="entry name" value="aa-tRNA-synth_I_CS"/>
</dbReference>
<dbReference type="InterPro" id="IPR041872">
    <property type="entry name" value="Anticodon_Met"/>
</dbReference>
<dbReference type="InterPro" id="IPR004495">
    <property type="entry name" value="Met-tRNA-synth_bsu_C"/>
</dbReference>
<dbReference type="InterPro" id="IPR023458">
    <property type="entry name" value="Met-tRNA_ligase_1"/>
</dbReference>
<dbReference type="InterPro" id="IPR014758">
    <property type="entry name" value="Met-tRNA_synth"/>
</dbReference>
<dbReference type="InterPro" id="IPR015413">
    <property type="entry name" value="Methionyl/Leucyl_tRNA_Synth"/>
</dbReference>
<dbReference type="InterPro" id="IPR033911">
    <property type="entry name" value="MetRS_core"/>
</dbReference>
<dbReference type="InterPro" id="IPR029038">
    <property type="entry name" value="MetRS_Zn"/>
</dbReference>
<dbReference type="InterPro" id="IPR012340">
    <property type="entry name" value="NA-bd_OB-fold"/>
</dbReference>
<dbReference type="InterPro" id="IPR014729">
    <property type="entry name" value="Rossmann-like_a/b/a_fold"/>
</dbReference>
<dbReference type="InterPro" id="IPR002547">
    <property type="entry name" value="tRNA-bd_dom"/>
</dbReference>
<dbReference type="InterPro" id="IPR009080">
    <property type="entry name" value="tRNAsynth_Ia_anticodon-bd"/>
</dbReference>
<dbReference type="NCBIfam" id="TIGR00398">
    <property type="entry name" value="metG"/>
    <property type="match status" value="1"/>
</dbReference>
<dbReference type="NCBIfam" id="TIGR00399">
    <property type="entry name" value="metG_C_term"/>
    <property type="match status" value="1"/>
</dbReference>
<dbReference type="NCBIfam" id="NF001100">
    <property type="entry name" value="PRK00133.1"/>
    <property type="match status" value="1"/>
</dbReference>
<dbReference type="PANTHER" id="PTHR45765">
    <property type="entry name" value="METHIONINE--TRNA LIGASE"/>
    <property type="match status" value="1"/>
</dbReference>
<dbReference type="PANTHER" id="PTHR45765:SF1">
    <property type="entry name" value="METHIONINE--TRNA LIGASE, CYTOPLASMIC"/>
    <property type="match status" value="1"/>
</dbReference>
<dbReference type="Pfam" id="PF19303">
    <property type="entry name" value="Anticodon_3"/>
    <property type="match status" value="1"/>
</dbReference>
<dbReference type="Pfam" id="PF09334">
    <property type="entry name" value="tRNA-synt_1g"/>
    <property type="match status" value="1"/>
</dbReference>
<dbReference type="Pfam" id="PF01588">
    <property type="entry name" value="tRNA_bind"/>
    <property type="match status" value="1"/>
</dbReference>
<dbReference type="PRINTS" id="PR01041">
    <property type="entry name" value="TRNASYNTHMET"/>
</dbReference>
<dbReference type="SUPFAM" id="SSF47323">
    <property type="entry name" value="Anticodon-binding domain of a subclass of class I aminoacyl-tRNA synthetases"/>
    <property type="match status" value="1"/>
</dbReference>
<dbReference type="SUPFAM" id="SSF57770">
    <property type="entry name" value="Methionyl-tRNA synthetase (MetRS), Zn-domain"/>
    <property type="match status" value="1"/>
</dbReference>
<dbReference type="SUPFAM" id="SSF50249">
    <property type="entry name" value="Nucleic acid-binding proteins"/>
    <property type="match status" value="1"/>
</dbReference>
<dbReference type="SUPFAM" id="SSF52374">
    <property type="entry name" value="Nucleotidylyl transferase"/>
    <property type="match status" value="1"/>
</dbReference>
<dbReference type="PROSITE" id="PS00178">
    <property type="entry name" value="AA_TRNA_LIGASE_I"/>
    <property type="match status" value="1"/>
</dbReference>
<dbReference type="PROSITE" id="PS50886">
    <property type="entry name" value="TRBD"/>
    <property type="match status" value="1"/>
</dbReference>
<evidence type="ECO:0000255" key="1">
    <source>
        <dbReference type="HAMAP-Rule" id="MF_00098"/>
    </source>
</evidence>
<protein>
    <recommendedName>
        <fullName evidence="1">Methionine--tRNA ligase</fullName>
        <ecNumber evidence="1">6.1.1.10</ecNumber>
    </recommendedName>
    <alternativeName>
        <fullName evidence="1">Methionyl-tRNA synthetase</fullName>
        <shortName evidence="1">MetRS</shortName>
    </alternativeName>
</protein>
<reference key="1">
    <citation type="journal article" date="2008" name="J. Bacteriol.">
        <title>The pangenome structure of Escherichia coli: comparative genomic analysis of E. coli commensal and pathogenic isolates.</title>
        <authorList>
            <person name="Rasko D.A."/>
            <person name="Rosovitz M.J."/>
            <person name="Myers G.S.A."/>
            <person name="Mongodin E.F."/>
            <person name="Fricke W.F."/>
            <person name="Gajer P."/>
            <person name="Crabtree J."/>
            <person name="Sebaihia M."/>
            <person name="Thomson N.R."/>
            <person name="Chaudhuri R."/>
            <person name="Henderson I.R."/>
            <person name="Sperandio V."/>
            <person name="Ravel J."/>
        </authorList>
    </citation>
    <scope>NUCLEOTIDE SEQUENCE [LARGE SCALE GENOMIC DNA]</scope>
    <source>
        <strain>HS</strain>
    </source>
</reference>
<name>SYM_ECOHS</name>
<sequence>MTQVAKKILVTCALPYANGSIHLGHMLEHIQADVWVRYQRMRGHEVNFICADDAHGTPIMLKAQQLGITPEQMIGEMSQEHQTDFAGFNISYDNYHSTHSEENRQLSELIYSRLKENGFIKNRTISQLYDPEKGMFLPDRFVKGTCPKCKSPDQYGDNCEVCGATYSPTELIEPKSVVSGATPVMRDSEHFFFDLPSFSEMLQAWTRSGALQEQVANKMQEWFESGLQQWDISRDAPYFGFEIPNAPGKYFYVWLDAPIGYMGSFKNLCDKRGDSVSFDEYWKKDSTAELYHFIGKDIVYFHSLFWPAMLEGSNFRKPTNLFVHGYVTVNGAKMSKSRGTFIKASTWLNHFDADSLRYYYTAKLSSRIDDIDLNLEDFVQRVNADIVNKVVNLASRNAGFINKRFDGVLANELADPQLYKTFTDAAEVIGEAWESREFGKAVREIMALADLANRYVDEQAPWVVAKQEGRDADLQAICSMGINLFRVLMTYLKPVLPKLTERAEAFLNTELTWDGIQQPLLGHKVNPFKALYNRIDMKQVEALVEASKEEVKAAAAPVTGPLADDPIQETITFDDFAKVDLRVALIENAEFVEGSDKLLRLTLDLGGEKRNVFSGIRSAYPDPQALIGRHTIMVANLAPRKMRFGISEGMVMAAGPGGKDIFLLSPDAGAKPGHQVK</sequence>